<comment type="function">
    <text evidence="1 2">Catalyzes the sequential NAD-dependent oxidations of L-histidinol to L-histidinaldehyde and then to L-histidine.</text>
</comment>
<comment type="catalytic activity">
    <reaction evidence="1 2">
        <text>L-histidinol + 2 NAD(+) + H2O = L-histidine + 2 NADH + 3 H(+)</text>
        <dbReference type="Rhea" id="RHEA:20641"/>
        <dbReference type="ChEBI" id="CHEBI:15377"/>
        <dbReference type="ChEBI" id="CHEBI:15378"/>
        <dbReference type="ChEBI" id="CHEBI:57540"/>
        <dbReference type="ChEBI" id="CHEBI:57595"/>
        <dbReference type="ChEBI" id="CHEBI:57699"/>
        <dbReference type="ChEBI" id="CHEBI:57945"/>
        <dbReference type="EC" id="1.1.1.23"/>
    </reaction>
</comment>
<comment type="cofactor">
    <cofactor evidence="1 2">
        <name>Zn(2+)</name>
        <dbReference type="ChEBI" id="CHEBI:29105"/>
    </cofactor>
    <text evidence="1 2">Binds 1 zinc ion per subunit.</text>
</comment>
<comment type="biophysicochemical properties">
    <kinetics>
        <KM evidence="2">4.9 uM for L-histidinol (at 25 degrees Celsius)</KM>
        <KM evidence="2">1.4 mM for NAD (at 25 degrees Celsius)</KM>
        <text>kcat is 1.45 sec(-1) for L-histidinol.</text>
    </kinetics>
</comment>
<comment type="pathway">
    <text evidence="1">Amino-acid biosynthesis; L-histidine biosynthesis; L-histidine from 5-phospho-alpha-D-ribose 1-diphosphate: step 9/9.</text>
</comment>
<comment type="subunit">
    <text evidence="2">Homodimer.</text>
</comment>
<comment type="similarity">
    <text evidence="1 4">Belongs to the histidinol dehydrogenase family.</text>
</comment>
<comment type="sequence caution" evidence="3">
    <conflict type="erroneous initiation">
        <sequence resource="EMBL-CDS" id="CCP44363"/>
    </conflict>
    <text>Truncated N-terminus.</text>
</comment>
<gene>
    <name evidence="1" type="primary">hisD</name>
    <name type="ordered locus">Rv1599</name>
    <name type="ORF">MTCY336.05c</name>
</gene>
<sequence length="444" mass="45941">MTAPPPVLTRIDLRGAELTAAELRAALPRGGADVEAVLPTVRPIVAAVAERGAEAALDFGASFDGVRPHAIRVPDAALDAALAGLDCDVCEALQVMVERTRAVHSGQRRTDVTTTLGPGATVTERWVPVERVGLYVPGGNAVYPSSVVMNVVPAQAAGVDSLVVASPPQAQWDGMPHPTILAAARLLGVDEVWAVGGAQAVALLAYGGTDTDGAALTPVDMITGPGNIYVTAAKRLCRSRVGIDAEAGPTEIAILADHTADPVHVAADLISQAEHDELAASVLVTPSEDLADATDAELAGQLQTTVHRERVTAALTGRQSAIVLVDDVDAAVLVVNAYAAEHLEIQTADAPQVASRIRSAGAIFVGPWSPVSLGDYCAGSNHVLPTAGCARHSSGLSVQTFLRGIHVVEYTEAALKDVSGHVITLATAEDLPAHGEAVRRRFER</sequence>
<evidence type="ECO:0000255" key="1">
    <source>
        <dbReference type="HAMAP-Rule" id="MF_01024"/>
    </source>
</evidence>
<evidence type="ECO:0000269" key="2">
    <source>
    </source>
</evidence>
<evidence type="ECO:0000269" key="3">
    <source>
    </source>
</evidence>
<evidence type="ECO:0000305" key="4"/>
<reference key="1">
    <citation type="journal article" date="1998" name="Nature">
        <title>Deciphering the biology of Mycobacterium tuberculosis from the complete genome sequence.</title>
        <authorList>
            <person name="Cole S.T."/>
            <person name="Brosch R."/>
            <person name="Parkhill J."/>
            <person name="Garnier T."/>
            <person name="Churcher C.M."/>
            <person name="Harris D.E."/>
            <person name="Gordon S.V."/>
            <person name="Eiglmeier K."/>
            <person name="Gas S."/>
            <person name="Barry C.E. III"/>
            <person name="Tekaia F."/>
            <person name="Badcock K."/>
            <person name="Basham D."/>
            <person name="Brown D."/>
            <person name="Chillingworth T."/>
            <person name="Connor R."/>
            <person name="Davies R.M."/>
            <person name="Devlin K."/>
            <person name="Feltwell T."/>
            <person name="Gentles S."/>
            <person name="Hamlin N."/>
            <person name="Holroyd S."/>
            <person name="Hornsby T."/>
            <person name="Jagels K."/>
            <person name="Krogh A."/>
            <person name="McLean J."/>
            <person name="Moule S."/>
            <person name="Murphy L.D."/>
            <person name="Oliver S."/>
            <person name="Osborne J."/>
            <person name="Quail M.A."/>
            <person name="Rajandream M.A."/>
            <person name="Rogers J."/>
            <person name="Rutter S."/>
            <person name="Seeger K."/>
            <person name="Skelton S."/>
            <person name="Squares S."/>
            <person name="Squares R."/>
            <person name="Sulston J.E."/>
            <person name="Taylor K."/>
            <person name="Whitehead S."/>
            <person name="Barrell B.G."/>
        </authorList>
    </citation>
    <scope>NUCLEOTIDE SEQUENCE [LARGE SCALE GENOMIC DNA]</scope>
    <source>
        <strain>ATCC 25618 / H37Rv</strain>
    </source>
</reference>
<reference key="2">
    <citation type="journal article" date="2022" name="Genomics">
        <title>Deep N-terminomics of Mycobacterium tuberculosis H37Rv extensively correct annotated encoding genes.</title>
        <authorList>
            <person name="Shi J."/>
            <person name="Meng S."/>
            <person name="Wan L."/>
            <person name="Zhang Z."/>
            <person name="Jiang S."/>
            <person name="Zhu H."/>
            <person name="Dai E."/>
            <person name="Chang L."/>
            <person name="Gao H."/>
            <person name="Wan K."/>
            <person name="Zhang L."/>
            <person name="Zhao X."/>
            <person name="Liu H."/>
            <person name="Lyu Z."/>
            <person name="Zhang Y."/>
            <person name="Xu P."/>
        </authorList>
    </citation>
    <scope>PROTEIN SEQUENCE OF 2-10</scope>
    <scope>SEQUENCE REVISION TO N-TERMINUS</scope>
    <source>
        <strain>H37Rv</strain>
    </source>
</reference>
<reference key="3">
    <citation type="journal article" date="2011" name="Arch. Biochem. Biophys.">
        <title>Molecular, kinetic, thermodynamic, and structural analyses of Mycobacterium tuberculosis hisD-encoded metal-dependent dimeric histidinol dehydrogenase (EC 1.1.1.23).</title>
        <authorList>
            <person name="Nunes J.E."/>
            <person name="Ducati R.G."/>
            <person name="Breda A."/>
            <person name="Rosado L.A."/>
            <person name="de Souza B.M."/>
            <person name="Palma M.S."/>
            <person name="Santos D.S."/>
            <person name="Basso L.A."/>
        </authorList>
    </citation>
    <scope>FUNCTION</scope>
    <scope>CATALYTIC ACTIVITY</scope>
    <scope>COFACTOR</scope>
    <scope>BIOPHYSICOCHEMICAL PROPERTIES</scope>
    <scope>REACTION MECHANISM</scope>
    <scope>SUBUNIT</scope>
    <source>
        <strain>ATCC 25618 / H37Rv</strain>
    </source>
</reference>
<reference key="4">
    <citation type="journal article" date="2011" name="Mol. Cell. Proteomics">
        <title>Proteogenomic analysis of Mycobacterium tuberculosis by high resolution mass spectrometry.</title>
        <authorList>
            <person name="Kelkar D.S."/>
            <person name="Kumar D."/>
            <person name="Kumar P."/>
            <person name="Balakrishnan L."/>
            <person name="Muthusamy B."/>
            <person name="Yadav A.K."/>
            <person name="Shrivastava P."/>
            <person name="Marimuthu A."/>
            <person name="Anand S."/>
            <person name="Sundaram H."/>
            <person name="Kingsbury R."/>
            <person name="Harsha H.C."/>
            <person name="Nair B."/>
            <person name="Prasad T.S."/>
            <person name="Chauhan D.S."/>
            <person name="Katoch K."/>
            <person name="Katoch V.M."/>
            <person name="Kumar P."/>
            <person name="Chaerkady R."/>
            <person name="Ramachandran S."/>
            <person name="Dash D."/>
            <person name="Pandey A."/>
        </authorList>
    </citation>
    <scope>IDENTIFICATION BY MASS SPECTROMETRY [LARGE SCALE ANALYSIS]</scope>
    <source>
        <strain>ATCC 25618 / H37Rv</strain>
    </source>
</reference>
<proteinExistence type="evidence at protein level"/>
<keyword id="KW-0028">Amino-acid biosynthesis</keyword>
<keyword id="KW-0903">Direct protein sequencing</keyword>
<keyword id="KW-0368">Histidine biosynthesis</keyword>
<keyword id="KW-0479">Metal-binding</keyword>
<keyword id="KW-0520">NAD</keyword>
<keyword id="KW-0560">Oxidoreductase</keyword>
<keyword id="KW-1185">Reference proteome</keyword>
<keyword id="KW-0862">Zinc</keyword>
<name>HISX_MYCTU</name>
<dbReference type="EC" id="1.1.1.23" evidence="1 2"/>
<dbReference type="EMBL" id="AL123456">
    <property type="protein sequence ID" value="CCP44363.1"/>
    <property type="status" value="ALT_INIT"/>
    <property type="molecule type" value="Genomic_DNA"/>
</dbReference>
<dbReference type="PIR" id="A70544">
    <property type="entry name" value="A70544"/>
</dbReference>
<dbReference type="RefSeq" id="NP_216115.1">
    <property type="nucleotide sequence ID" value="NC_000962.3"/>
</dbReference>
<dbReference type="SMR" id="P9WNW9"/>
<dbReference type="FunCoup" id="P9WNW9">
    <property type="interactions" value="445"/>
</dbReference>
<dbReference type="STRING" id="83332.Rv1599"/>
<dbReference type="PaxDb" id="83332-Rv1599"/>
<dbReference type="DNASU" id="886277"/>
<dbReference type="GeneID" id="886277"/>
<dbReference type="KEGG" id="mtu:Rv1599"/>
<dbReference type="PATRIC" id="fig|83332.12.peg.1781"/>
<dbReference type="TubercuList" id="Rv1599"/>
<dbReference type="eggNOG" id="COG0141">
    <property type="taxonomic scope" value="Bacteria"/>
</dbReference>
<dbReference type="InParanoid" id="P9WNW9"/>
<dbReference type="OrthoDB" id="9805269at2"/>
<dbReference type="BRENDA" id="1.1.1.23">
    <property type="organism ID" value="3445"/>
</dbReference>
<dbReference type="UniPathway" id="UPA00031">
    <property type="reaction ID" value="UER00014"/>
</dbReference>
<dbReference type="Proteomes" id="UP000001584">
    <property type="component" value="Chromosome"/>
</dbReference>
<dbReference type="GO" id="GO:0005737">
    <property type="term" value="C:cytoplasm"/>
    <property type="evidence" value="ECO:0000318"/>
    <property type="project" value="GO_Central"/>
</dbReference>
<dbReference type="GO" id="GO:0005829">
    <property type="term" value="C:cytosol"/>
    <property type="evidence" value="ECO:0000318"/>
    <property type="project" value="GO_Central"/>
</dbReference>
<dbReference type="GO" id="GO:0009274">
    <property type="term" value="C:peptidoglycan-based cell wall"/>
    <property type="evidence" value="ECO:0007005"/>
    <property type="project" value="MTBBASE"/>
</dbReference>
<dbReference type="GO" id="GO:0004399">
    <property type="term" value="F:histidinol dehydrogenase activity"/>
    <property type="evidence" value="ECO:0000318"/>
    <property type="project" value="GO_Central"/>
</dbReference>
<dbReference type="GO" id="GO:0051287">
    <property type="term" value="F:NAD binding"/>
    <property type="evidence" value="ECO:0007669"/>
    <property type="project" value="InterPro"/>
</dbReference>
<dbReference type="GO" id="GO:0008270">
    <property type="term" value="F:zinc ion binding"/>
    <property type="evidence" value="ECO:0007669"/>
    <property type="project" value="UniProtKB-UniRule"/>
</dbReference>
<dbReference type="GO" id="GO:0000105">
    <property type="term" value="P:L-histidine biosynthetic process"/>
    <property type="evidence" value="ECO:0000318"/>
    <property type="project" value="GO_Central"/>
</dbReference>
<dbReference type="CDD" id="cd06572">
    <property type="entry name" value="Histidinol_dh"/>
    <property type="match status" value="1"/>
</dbReference>
<dbReference type="FunFam" id="3.40.50.1980:FF:000001">
    <property type="entry name" value="Histidinol dehydrogenase"/>
    <property type="match status" value="1"/>
</dbReference>
<dbReference type="Gene3D" id="1.20.5.1300">
    <property type="match status" value="1"/>
</dbReference>
<dbReference type="Gene3D" id="3.40.50.1980">
    <property type="entry name" value="Nitrogenase molybdenum iron protein domain"/>
    <property type="match status" value="2"/>
</dbReference>
<dbReference type="HAMAP" id="MF_01024">
    <property type="entry name" value="HisD"/>
    <property type="match status" value="1"/>
</dbReference>
<dbReference type="InterPro" id="IPR016161">
    <property type="entry name" value="Ald_DH/histidinol_DH"/>
</dbReference>
<dbReference type="InterPro" id="IPR001692">
    <property type="entry name" value="Histidinol_DH_CS"/>
</dbReference>
<dbReference type="InterPro" id="IPR022695">
    <property type="entry name" value="Histidinol_DH_monofunct"/>
</dbReference>
<dbReference type="InterPro" id="IPR012131">
    <property type="entry name" value="Hstdl_DH"/>
</dbReference>
<dbReference type="NCBIfam" id="TIGR00069">
    <property type="entry name" value="hisD"/>
    <property type="match status" value="1"/>
</dbReference>
<dbReference type="PANTHER" id="PTHR21256:SF2">
    <property type="entry name" value="HISTIDINE BIOSYNTHESIS TRIFUNCTIONAL PROTEIN"/>
    <property type="match status" value="1"/>
</dbReference>
<dbReference type="PANTHER" id="PTHR21256">
    <property type="entry name" value="HISTIDINOL DEHYDROGENASE HDH"/>
    <property type="match status" value="1"/>
</dbReference>
<dbReference type="Pfam" id="PF00815">
    <property type="entry name" value="Histidinol_dh"/>
    <property type="match status" value="1"/>
</dbReference>
<dbReference type="PIRSF" id="PIRSF000099">
    <property type="entry name" value="Histidinol_dh"/>
    <property type="match status" value="1"/>
</dbReference>
<dbReference type="PRINTS" id="PR00083">
    <property type="entry name" value="HOLDHDRGNASE"/>
</dbReference>
<dbReference type="SUPFAM" id="SSF53720">
    <property type="entry name" value="ALDH-like"/>
    <property type="match status" value="1"/>
</dbReference>
<dbReference type="PROSITE" id="PS00611">
    <property type="entry name" value="HISOL_DEHYDROGENASE"/>
    <property type="match status" value="1"/>
</dbReference>
<accession>P9WNW9</accession>
<accession>L0TA42</accession>
<accession>O08396</accession>
<accession>P63950</accession>
<organism>
    <name type="scientific">Mycobacterium tuberculosis (strain ATCC 25618 / H37Rv)</name>
    <dbReference type="NCBI Taxonomy" id="83332"/>
    <lineage>
        <taxon>Bacteria</taxon>
        <taxon>Bacillati</taxon>
        <taxon>Actinomycetota</taxon>
        <taxon>Actinomycetes</taxon>
        <taxon>Mycobacteriales</taxon>
        <taxon>Mycobacteriaceae</taxon>
        <taxon>Mycobacterium</taxon>
        <taxon>Mycobacterium tuberculosis complex</taxon>
    </lineage>
</organism>
<protein>
    <recommendedName>
        <fullName evidence="1">Histidinol dehydrogenase</fullName>
        <shortName evidence="1">HDH</shortName>
        <ecNumber evidence="1 2">1.1.1.23</ecNumber>
    </recommendedName>
</protein>
<feature type="initiator methionine" description="Removed" evidence="3">
    <location>
        <position position="1"/>
    </location>
</feature>
<feature type="chain" id="PRO_0000135799" description="Histidinol dehydrogenase">
    <location>
        <begin position="2"/>
        <end position="444"/>
    </location>
</feature>
<feature type="active site" description="Proton acceptor" evidence="1">
    <location>
        <position position="341"/>
    </location>
</feature>
<feature type="active site" description="Proton acceptor" evidence="1">
    <location>
        <position position="342"/>
    </location>
</feature>
<feature type="binding site" evidence="1">
    <location>
        <position position="135"/>
    </location>
    <ligand>
        <name>NAD(+)</name>
        <dbReference type="ChEBI" id="CHEBI:57540"/>
    </ligand>
</feature>
<feature type="binding site" evidence="1">
    <location>
        <position position="199"/>
    </location>
    <ligand>
        <name>NAD(+)</name>
        <dbReference type="ChEBI" id="CHEBI:57540"/>
    </ligand>
</feature>
<feature type="binding site" evidence="1">
    <location>
        <position position="227"/>
    </location>
    <ligand>
        <name>NAD(+)</name>
        <dbReference type="ChEBI" id="CHEBI:57540"/>
    </ligand>
</feature>
<feature type="binding site" evidence="1">
    <location>
        <position position="250"/>
    </location>
    <ligand>
        <name>substrate</name>
    </ligand>
</feature>
<feature type="binding site" evidence="1">
    <location>
        <position position="272"/>
    </location>
    <ligand>
        <name>substrate</name>
    </ligand>
</feature>
<feature type="binding site" evidence="1">
    <location>
        <position position="272"/>
    </location>
    <ligand>
        <name>Zn(2+)</name>
        <dbReference type="ChEBI" id="CHEBI:29105"/>
    </ligand>
</feature>
<feature type="binding site" evidence="1">
    <location>
        <position position="275"/>
    </location>
    <ligand>
        <name>substrate</name>
    </ligand>
</feature>
<feature type="binding site" evidence="1">
    <location>
        <position position="275"/>
    </location>
    <ligand>
        <name>Zn(2+)</name>
        <dbReference type="ChEBI" id="CHEBI:29105"/>
    </ligand>
</feature>
<feature type="binding site" evidence="1">
    <location>
        <position position="342"/>
    </location>
    <ligand>
        <name>substrate</name>
    </ligand>
</feature>
<feature type="binding site" evidence="1">
    <location>
        <position position="375"/>
    </location>
    <ligand>
        <name>substrate</name>
    </ligand>
</feature>
<feature type="binding site" evidence="1">
    <location>
        <position position="375"/>
    </location>
    <ligand>
        <name>Zn(2+)</name>
        <dbReference type="ChEBI" id="CHEBI:29105"/>
    </ligand>
</feature>
<feature type="binding site" evidence="1">
    <location>
        <position position="429"/>
    </location>
    <ligand>
        <name>substrate</name>
    </ligand>
</feature>
<feature type="binding site" evidence="1">
    <location>
        <position position="434"/>
    </location>
    <ligand>
        <name>substrate</name>
    </ligand>
</feature>
<feature type="binding site" evidence="1">
    <location>
        <position position="434"/>
    </location>
    <ligand>
        <name>Zn(2+)</name>
        <dbReference type="ChEBI" id="CHEBI:29105"/>
    </ligand>
</feature>